<feature type="chain" id="PRO_1000122813" description="UDP-3-O-acyl-N-acetylglucosamine deacetylase">
    <location>
        <begin position="1"/>
        <end position="305"/>
    </location>
</feature>
<feature type="active site" description="Proton donor" evidence="1">
    <location>
        <position position="265"/>
    </location>
</feature>
<feature type="binding site" evidence="1">
    <location>
        <position position="79"/>
    </location>
    <ligand>
        <name>Zn(2+)</name>
        <dbReference type="ChEBI" id="CHEBI:29105"/>
    </ligand>
</feature>
<feature type="binding site" evidence="1">
    <location>
        <position position="238"/>
    </location>
    <ligand>
        <name>Zn(2+)</name>
        <dbReference type="ChEBI" id="CHEBI:29105"/>
    </ligand>
</feature>
<feature type="binding site" evidence="1">
    <location>
        <position position="242"/>
    </location>
    <ligand>
        <name>Zn(2+)</name>
        <dbReference type="ChEBI" id="CHEBI:29105"/>
    </ligand>
</feature>
<accession>B5F7X0</accession>
<proteinExistence type="inferred from homology"/>
<comment type="function">
    <text evidence="1">Catalyzes the hydrolysis of UDP-3-O-myristoyl-N-acetylglucosamine to form UDP-3-O-myristoylglucosamine and acetate, the committed step in lipid A biosynthesis.</text>
</comment>
<comment type="catalytic activity">
    <reaction evidence="1">
        <text>a UDP-3-O-[(3R)-3-hydroxyacyl]-N-acetyl-alpha-D-glucosamine + H2O = a UDP-3-O-[(3R)-3-hydroxyacyl]-alpha-D-glucosamine + acetate</text>
        <dbReference type="Rhea" id="RHEA:67816"/>
        <dbReference type="ChEBI" id="CHEBI:15377"/>
        <dbReference type="ChEBI" id="CHEBI:30089"/>
        <dbReference type="ChEBI" id="CHEBI:137740"/>
        <dbReference type="ChEBI" id="CHEBI:173225"/>
        <dbReference type="EC" id="3.5.1.108"/>
    </reaction>
</comment>
<comment type="cofactor">
    <cofactor evidence="1">
        <name>Zn(2+)</name>
        <dbReference type="ChEBI" id="CHEBI:29105"/>
    </cofactor>
</comment>
<comment type="pathway">
    <text evidence="1">Glycolipid biosynthesis; lipid IV(A) biosynthesis; lipid IV(A) from (3R)-3-hydroxytetradecanoyl-[acyl-carrier-protein] and UDP-N-acetyl-alpha-D-glucosamine: step 2/6.</text>
</comment>
<comment type="similarity">
    <text evidence="1">Belongs to the LpxC family.</text>
</comment>
<name>LPXC_SALA4</name>
<protein>
    <recommendedName>
        <fullName evidence="1">UDP-3-O-acyl-N-acetylglucosamine deacetylase</fullName>
        <shortName evidence="1">UDP-3-O-acyl-GlcNAc deacetylase</shortName>
        <ecNumber evidence="1">3.5.1.108</ecNumber>
    </recommendedName>
    <alternativeName>
        <fullName evidence="1">UDP-3-O-[R-3-hydroxymyristoyl]-N-acetylglucosamine deacetylase</fullName>
    </alternativeName>
</protein>
<sequence length="305" mass="33985">MIKQRTLKRIVQATGVGLHTGKKVTLTLRPAPANTGVIYRRTDLNPPVDFPADAKSVRDTMLCTCLVNEHDVRISTVEHLNAALAGLGIDNIVIEVNAPEIPIMDGSAAPFVYLLLDAGIDELNCAKKFVRIKETVRVEDGDKWAEFRPYNGFTLDFTIDFNHPAIDSSSQRYAMNFSADAFMRQISRARTFGFMRDIEYLQSRGLCLGGSFDCAIVVDDYRVLNEDGLRFEDEFVRHKMLDAIGDLFMCGHNIIGAFTAYKSGHALNNKLLQAVLAKQEAWEFVTFQDDAELPLAFKAPSTVLA</sequence>
<evidence type="ECO:0000255" key="1">
    <source>
        <dbReference type="HAMAP-Rule" id="MF_00388"/>
    </source>
</evidence>
<organism>
    <name type="scientific">Salmonella agona (strain SL483)</name>
    <dbReference type="NCBI Taxonomy" id="454166"/>
    <lineage>
        <taxon>Bacteria</taxon>
        <taxon>Pseudomonadati</taxon>
        <taxon>Pseudomonadota</taxon>
        <taxon>Gammaproteobacteria</taxon>
        <taxon>Enterobacterales</taxon>
        <taxon>Enterobacteriaceae</taxon>
        <taxon>Salmonella</taxon>
    </lineage>
</organism>
<dbReference type="EC" id="3.5.1.108" evidence="1"/>
<dbReference type="EMBL" id="CP001138">
    <property type="protein sequence ID" value="ACH50944.1"/>
    <property type="molecule type" value="Genomic_DNA"/>
</dbReference>
<dbReference type="RefSeq" id="WP_000595487.1">
    <property type="nucleotide sequence ID" value="NC_011149.1"/>
</dbReference>
<dbReference type="SMR" id="B5F7X0"/>
<dbReference type="KEGG" id="sea:SeAg_B0151"/>
<dbReference type="HOGENOM" id="CLU_046528_1_0_6"/>
<dbReference type="UniPathway" id="UPA00359">
    <property type="reaction ID" value="UER00478"/>
</dbReference>
<dbReference type="Proteomes" id="UP000008819">
    <property type="component" value="Chromosome"/>
</dbReference>
<dbReference type="GO" id="GO:0016020">
    <property type="term" value="C:membrane"/>
    <property type="evidence" value="ECO:0007669"/>
    <property type="project" value="GOC"/>
</dbReference>
<dbReference type="GO" id="GO:0046872">
    <property type="term" value="F:metal ion binding"/>
    <property type="evidence" value="ECO:0007669"/>
    <property type="project" value="UniProtKB-KW"/>
</dbReference>
<dbReference type="GO" id="GO:0103117">
    <property type="term" value="F:UDP-3-O-acyl-N-acetylglucosamine deacetylase activity"/>
    <property type="evidence" value="ECO:0007669"/>
    <property type="project" value="UniProtKB-UniRule"/>
</dbReference>
<dbReference type="GO" id="GO:0009245">
    <property type="term" value="P:lipid A biosynthetic process"/>
    <property type="evidence" value="ECO:0007669"/>
    <property type="project" value="UniProtKB-UniRule"/>
</dbReference>
<dbReference type="FunFam" id="3.30.1700.10:FF:000001">
    <property type="entry name" value="UDP-3-O-acyl-N-acetylglucosamine deacetylase"/>
    <property type="match status" value="1"/>
</dbReference>
<dbReference type="FunFam" id="3.30.230.20:FF:000001">
    <property type="entry name" value="UDP-3-O-acyl-N-acetylglucosamine deacetylase"/>
    <property type="match status" value="1"/>
</dbReference>
<dbReference type="Gene3D" id="3.30.230.20">
    <property type="entry name" value="lpxc deacetylase, domain 1"/>
    <property type="match status" value="1"/>
</dbReference>
<dbReference type="Gene3D" id="3.30.1700.10">
    <property type="entry name" value="lpxc deacetylase, domain 2"/>
    <property type="match status" value="1"/>
</dbReference>
<dbReference type="HAMAP" id="MF_00388">
    <property type="entry name" value="LpxC"/>
    <property type="match status" value="1"/>
</dbReference>
<dbReference type="InterPro" id="IPR020568">
    <property type="entry name" value="Ribosomal_Su5_D2-typ_SF"/>
</dbReference>
<dbReference type="InterPro" id="IPR004463">
    <property type="entry name" value="UDP-acyl_GlcNac_deAcase"/>
</dbReference>
<dbReference type="InterPro" id="IPR011334">
    <property type="entry name" value="UDP-acyl_GlcNac_deAcase_C"/>
</dbReference>
<dbReference type="InterPro" id="IPR015870">
    <property type="entry name" value="UDP-acyl_N-AcGlcN_deAcase_N"/>
</dbReference>
<dbReference type="NCBIfam" id="TIGR00325">
    <property type="entry name" value="lpxC"/>
    <property type="match status" value="1"/>
</dbReference>
<dbReference type="PANTHER" id="PTHR33694">
    <property type="entry name" value="UDP-3-O-ACYL-N-ACETYLGLUCOSAMINE DEACETYLASE 1, MITOCHONDRIAL-RELATED"/>
    <property type="match status" value="1"/>
</dbReference>
<dbReference type="PANTHER" id="PTHR33694:SF1">
    <property type="entry name" value="UDP-3-O-ACYL-N-ACETYLGLUCOSAMINE DEACETYLASE 1, MITOCHONDRIAL-RELATED"/>
    <property type="match status" value="1"/>
</dbReference>
<dbReference type="Pfam" id="PF03331">
    <property type="entry name" value="LpxC"/>
    <property type="match status" value="1"/>
</dbReference>
<dbReference type="SUPFAM" id="SSF54211">
    <property type="entry name" value="Ribosomal protein S5 domain 2-like"/>
    <property type="match status" value="2"/>
</dbReference>
<keyword id="KW-0378">Hydrolase</keyword>
<keyword id="KW-0441">Lipid A biosynthesis</keyword>
<keyword id="KW-0444">Lipid biosynthesis</keyword>
<keyword id="KW-0443">Lipid metabolism</keyword>
<keyword id="KW-0479">Metal-binding</keyword>
<keyword id="KW-0862">Zinc</keyword>
<reference key="1">
    <citation type="journal article" date="2011" name="J. Bacteriol.">
        <title>Comparative genomics of 28 Salmonella enterica isolates: evidence for CRISPR-mediated adaptive sublineage evolution.</title>
        <authorList>
            <person name="Fricke W.F."/>
            <person name="Mammel M.K."/>
            <person name="McDermott P.F."/>
            <person name="Tartera C."/>
            <person name="White D.G."/>
            <person name="Leclerc J.E."/>
            <person name="Ravel J."/>
            <person name="Cebula T.A."/>
        </authorList>
    </citation>
    <scope>NUCLEOTIDE SEQUENCE [LARGE SCALE GENOMIC DNA]</scope>
    <source>
        <strain>SL483</strain>
    </source>
</reference>
<gene>
    <name evidence="1" type="primary">lpxC</name>
    <name type="ordered locus">SeAg_B0151</name>
</gene>